<comment type="function">
    <text evidence="1">DNA-dependent RNA polymerase catalyzes the transcription of DNA into RNA using the four ribonucleoside triphosphates as substrates.</text>
</comment>
<comment type="catalytic activity">
    <reaction evidence="1">
        <text>RNA(n) + a ribonucleoside 5'-triphosphate = RNA(n+1) + diphosphate</text>
        <dbReference type="Rhea" id="RHEA:21248"/>
        <dbReference type="Rhea" id="RHEA-COMP:14527"/>
        <dbReference type="Rhea" id="RHEA-COMP:17342"/>
        <dbReference type="ChEBI" id="CHEBI:33019"/>
        <dbReference type="ChEBI" id="CHEBI:61557"/>
        <dbReference type="ChEBI" id="CHEBI:140395"/>
        <dbReference type="EC" id="2.7.7.6"/>
    </reaction>
</comment>
<comment type="cofactor">
    <cofactor evidence="1">
        <name>Mg(2+)</name>
        <dbReference type="ChEBI" id="CHEBI:18420"/>
    </cofactor>
    <text evidence="1">Binds 1 Mg(2+) ion per subunit.</text>
</comment>
<comment type="cofactor">
    <cofactor evidence="1">
        <name>Zn(2+)</name>
        <dbReference type="ChEBI" id="CHEBI:29105"/>
    </cofactor>
    <text evidence="1">Binds 2 Zn(2+) ions per subunit.</text>
</comment>
<comment type="subunit">
    <text evidence="1">The RNAP catalytic core consists of 2 alpha, 1 beta, 1 beta' and 1 omega subunit. When a sigma factor is associated with the core the holoenzyme is formed, which can initiate transcription.</text>
</comment>
<comment type="similarity">
    <text evidence="1">Belongs to the RNA polymerase beta' chain family.</text>
</comment>
<gene>
    <name evidence="1" type="primary">rpoC</name>
    <name type="ordered locus">HS_1564</name>
</gene>
<accession>Q0I5B8</accession>
<evidence type="ECO:0000255" key="1">
    <source>
        <dbReference type="HAMAP-Rule" id="MF_01322"/>
    </source>
</evidence>
<proteinExistence type="inferred from homology"/>
<feature type="chain" id="PRO_0000353379" description="DNA-directed RNA polymerase subunit beta'">
    <location>
        <begin position="1"/>
        <end position="1420"/>
    </location>
</feature>
<feature type="binding site" evidence="1">
    <location>
        <position position="71"/>
    </location>
    <ligand>
        <name>Zn(2+)</name>
        <dbReference type="ChEBI" id="CHEBI:29105"/>
        <label>1</label>
    </ligand>
</feature>
<feature type="binding site" evidence="1">
    <location>
        <position position="73"/>
    </location>
    <ligand>
        <name>Zn(2+)</name>
        <dbReference type="ChEBI" id="CHEBI:29105"/>
        <label>1</label>
    </ligand>
</feature>
<feature type="binding site" evidence="1">
    <location>
        <position position="86"/>
    </location>
    <ligand>
        <name>Zn(2+)</name>
        <dbReference type="ChEBI" id="CHEBI:29105"/>
        <label>1</label>
    </ligand>
</feature>
<feature type="binding site" evidence="1">
    <location>
        <position position="89"/>
    </location>
    <ligand>
        <name>Zn(2+)</name>
        <dbReference type="ChEBI" id="CHEBI:29105"/>
        <label>1</label>
    </ligand>
</feature>
<feature type="binding site" evidence="1">
    <location>
        <position position="461"/>
    </location>
    <ligand>
        <name>Mg(2+)</name>
        <dbReference type="ChEBI" id="CHEBI:18420"/>
    </ligand>
</feature>
<feature type="binding site" evidence="1">
    <location>
        <position position="463"/>
    </location>
    <ligand>
        <name>Mg(2+)</name>
        <dbReference type="ChEBI" id="CHEBI:18420"/>
    </ligand>
</feature>
<feature type="binding site" evidence="1">
    <location>
        <position position="465"/>
    </location>
    <ligand>
        <name>Mg(2+)</name>
        <dbReference type="ChEBI" id="CHEBI:18420"/>
    </ligand>
</feature>
<feature type="binding site" evidence="1">
    <location>
        <position position="815"/>
    </location>
    <ligand>
        <name>Zn(2+)</name>
        <dbReference type="ChEBI" id="CHEBI:29105"/>
        <label>2</label>
    </ligand>
</feature>
<feature type="binding site" evidence="1">
    <location>
        <position position="889"/>
    </location>
    <ligand>
        <name>Zn(2+)</name>
        <dbReference type="ChEBI" id="CHEBI:29105"/>
        <label>2</label>
    </ligand>
</feature>
<feature type="binding site" evidence="1">
    <location>
        <position position="896"/>
    </location>
    <ligand>
        <name>Zn(2+)</name>
        <dbReference type="ChEBI" id="CHEBI:29105"/>
        <label>2</label>
    </ligand>
</feature>
<feature type="binding site" evidence="1">
    <location>
        <position position="899"/>
    </location>
    <ligand>
        <name>Zn(2+)</name>
        <dbReference type="ChEBI" id="CHEBI:29105"/>
        <label>2</label>
    </ligand>
</feature>
<protein>
    <recommendedName>
        <fullName evidence="1">DNA-directed RNA polymerase subunit beta'</fullName>
        <shortName evidence="1">RNAP subunit beta'</shortName>
        <ecNumber evidence="1">2.7.7.6</ecNumber>
    </recommendedName>
    <alternativeName>
        <fullName evidence="1">RNA polymerase subunit beta'</fullName>
    </alternativeName>
    <alternativeName>
        <fullName evidence="1">Transcriptase subunit beta'</fullName>
    </alternativeName>
</protein>
<keyword id="KW-0240">DNA-directed RNA polymerase</keyword>
<keyword id="KW-0460">Magnesium</keyword>
<keyword id="KW-0479">Metal-binding</keyword>
<keyword id="KW-0548">Nucleotidyltransferase</keyword>
<keyword id="KW-0804">Transcription</keyword>
<keyword id="KW-0808">Transferase</keyword>
<keyword id="KW-0862">Zinc</keyword>
<reference key="1">
    <citation type="journal article" date="2007" name="J. Bacteriol.">
        <title>Complete genome sequence of Haemophilus somnus (Histophilus somni) strain 129Pt and comparison to Haemophilus ducreyi 35000HP and Haemophilus influenzae Rd.</title>
        <authorList>
            <person name="Challacombe J.F."/>
            <person name="Duncan A.J."/>
            <person name="Brettin T.S."/>
            <person name="Bruce D."/>
            <person name="Chertkov O."/>
            <person name="Detter J.C."/>
            <person name="Han C.S."/>
            <person name="Misra M."/>
            <person name="Richardson P."/>
            <person name="Tapia R."/>
            <person name="Thayer N."/>
            <person name="Xie G."/>
            <person name="Inzana T.J."/>
        </authorList>
    </citation>
    <scope>NUCLEOTIDE SEQUENCE [LARGE SCALE GENOMIC DNA]</scope>
    <source>
        <strain>129Pt</strain>
    </source>
</reference>
<organism>
    <name type="scientific">Histophilus somni (strain 129Pt)</name>
    <name type="common">Haemophilus somnus</name>
    <dbReference type="NCBI Taxonomy" id="205914"/>
    <lineage>
        <taxon>Bacteria</taxon>
        <taxon>Pseudomonadati</taxon>
        <taxon>Pseudomonadota</taxon>
        <taxon>Gammaproteobacteria</taxon>
        <taxon>Pasteurellales</taxon>
        <taxon>Pasteurellaceae</taxon>
        <taxon>Histophilus</taxon>
    </lineage>
</organism>
<name>RPOC_HISS1</name>
<sequence>MKDLVKFLKAQSKTSEDFDVIKIGLASPDMIRSWSYGEVKKPETINYRTFKPERDGLFCARIFGPVKDYECLCGKYKRLKHRGVICEKCGVEVTQAKVRRERMGHIELASPVAHIWFLKSLPSRIGLLLDMPLRDIERVLYFESYIVIEPGMTDLERGQLLTEEQFLDAEDRWQDEFDAKMGAEAIQALLRDMDLEVECETLREELQSTNSETKRKKITKRLKLLESFIQSGNKPEWMVMTVLPVLPPDLRPLVPLDGGRFATSDLNDLYRRVINRNNRLKRLLDLIAPDIIVRNEKRMLQESVDALLDNGRRGRAITGSNRRPLKSLADMIKGKQGRFRQNLLGKRVDYSGRSVITVGPYLHLHQCGLPKKMALELFRPFIYAKLESRGFATTIKAAKKMVEREDAIVWDILADVIREHPILLNRAPTLHRLGIQAFEPILIEGKAIQLHPLVCAAFNADFDGDQMAVHVPLTLEAQLEARALMMSTNNILSPANGEPIIVPSQDVVLGLYYMTRDKVNGKGEGMLLQDSREAEKAYRTGQAELHSRVKVRITEYVKNAIGEFEPQTHLVDTTIGRAILWMIAPKGMPFSLFNQTLGKKAISKLINESYRRLGLKESVLFADHIMYTGFAYAARSGSSVGIDDMVIPQKKYEIISAAEEEVAEIQEQFQSGLVTAGERYNKVIDIWAAANERVAKAMMENLSQEEVINREGQPEKQASFNSIFMMADSGARGSAAQIRQLAGMRGLMARPDGSIIETPITANFREGLNVLQYFISTHGARKGLADTALKTANSGYLTRRLVDVAQDLVIIEDDCGTHEGIVMTPLIEGGDVKEALRDRVLGRVAAEDILKPGTNEVLISRNTLLDEKLCDVIDENSVDSIKVRSVVTCDTDFGVCAKCYGRDLARGHLINQGEAVGVIAAQSIGEPGTQLTMRTFHIGGAASAAAKESSVQVKNTGTLRLTNVKFVTNKEGKLVLTSRNTELTIIDTFGRTKEHYKVPYGAVLNHADGEEVTAGETVANWDPHTMPVISEVSGFVKFVEIVDGLTVTRQTDELTGLSSIVVQDVGERATAGKDLRPALKLVDAQGNDIFIPGTDVMAQYFLPGKAIVTLDDGAEVFVGEPLARIPQESVGTKDITGGLPRVADLFEARKPKEPAILAEISGIVSFGKETKGKRRLLITPMEGETYEEMIPKWRQLNVFEGELVQRGDLISDGAETPHDILRLRGVHAVTDYIVNEVQEVYRLQGVKINDKHIEVIVRQMLRKAIITNAYDSEFLEGEQVEVARVKIVNRKRAEEGKPLVEFERELLGITKASLATESFISAASFQETTRVLTEAAVAGKRDELRGLKENVIVGRLIPAGTGFAYHQNRQKNRLVGGMENTTEVKLSAVDEEEIASEFTFSAEDATANLAEMLNMADDAE</sequence>
<dbReference type="EC" id="2.7.7.6" evidence="1"/>
<dbReference type="EMBL" id="CP000436">
    <property type="protein sequence ID" value="ABI25832.1"/>
    <property type="molecule type" value="Genomic_DNA"/>
</dbReference>
<dbReference type="SMR" id="Q0I5B8"/>
<dbReference type="KEGG" id="hso:HS_1564"/>
<dbReference type="eggNOG" id="COG0086">
    <property type="taxonomic scope" value="Bacteria"/>
</dbReference>
<dbReference type="HOGENOM" id="CLU_000524_3_1_6"/>
<dbReference type="GO" id="GO:0000428">
    <property type="term" value="C:DNA-directed RNA polymerase complex"/>
    <property type="evidence" value="ECO:0007669"/>
    <property type="project" value="UniProtKB-KW"/>
</dbReference>
<dbReference type="GO" id="GO:0003677">
    <property type="term" value="F:DNA binding"/>
    <property type="evidence" value="ECO:0007669"/>
    <property type="project" value="UniProtKB-UniRule"/>
</dbReference>
<dbReference type="GO" id="GO:0003899">
    <property type="term" value="F:DNA-directed RNA polymerase activity"/>
    <property type="evidence" value="ECO:0007669"/>
    <property type="project" value="UniProtKB-UniRule"/>
</dbReference>
<dbReference type="GO" id="GO:0000287">
    <property type="term" value="F:magnesium ion binding"/>
    <property type="evidence" value="ECO:0007669"/>
    <property type="project" value="UniProtKB-UniRule"/>
</dbReference>
<dbReference type="GO" id="GO:0008270">
    <property type="term" value="F:zinc ion binding"/>
    <property type="evidence" value="ECO:0007669"/>
    <property type="project" value="UniProtKB-UniRule"/>
</dbReference>
<dbReference type="GO" id="GO:0006351">
    <property type="term" value="P:DNA-templated transcription"/>
    <property type="evidence" value="ECO:0007669"/>
    <property type="project" value="UniProtKB-UniRule"/>
</dbReference>
<dbReference type="CDD" id="cd02655">
    <property type="entry name" value="RNAP_beta'_C"/>
    <property type="match status" value="1"/>
</dbReference>
<dbReference type="CDD" id="cd01609">
    <property type="entry name" value="RNAP_beta'_N"/>
    <property type="match status" value="1"/>
</dbReference>
<dbReference type="FunFam" id="1.10.132.30:FF:000003">
    <property type="entry name" value="DNA-directed RNA polymerase subunit beta"/>
    <property type="match status" value="1"/>
</dbReference>
<dbReference type="FunFam" id="1.10.150.390:FF:000002">
    <property type="entry name" value="DNA-directed RNA polymerase subunit beta"/>
    <property type="match status" value="1"/>
</dbReference>
<dbReference type="FunFam" id="4.10.860.120:FF:000001">
    <property type="entry name" value="DNA-directed RNA polymerase subunit beta"/>
    <property type="match status" value="1"/>
</dbReference>
<dbReference type="Gene3D" id="1.10.132.30">
    <property type="match status" value="1"/>
</dbReference>
<dbReference type="Gene3D" id="1.10.150.390">
    <property type="match status" value="1"/>
</dbReference>
<dbReference type="Gene3D" id="1.10.1790.20">
    <property type="match status" value="1"/>
</dbReference>
<dbReference type="Gene3D" id="1.10.40.90">
    <property type="match status" value="1"/>
</dbReference>
<dbReference type="Gene3D" id="2.40.40.20">
    <property type="match status" value="1"/>
</dbReference>
<dbReference type="Gene3D" id="2.40.50.100">
    <property type="match status" value="3"/>
</dbReference>
<dbReference type="Gene3D" id="4.10.860.120">
    <property type="entry name" value="RNA polymerase II, clamp domain"/>
    <property type="match status" value="1"/>
</dbReference>
<dbReference type="Gene3D" id="1.10.274.100">
    <property type="entry name" value="RNA polymerase Rpb1, domain 3"/>
    <property type="match status" value="1"/>
</dbReference>
<dbReference type="HAMAP" id="MF_01322">
    <property type="entry name" value="RNApol_bact_RpoC"/>
    <property type="match status" value="1"/>
</dbReference>
<dbReference type="InterPro" id="IPR045867">
    <property type="entry name" value="DNA-dir_RpoC_beta_prime"/>
</dbReference>
<dbReference type="InterPro" id="IPR012754">
    <property type="entry name" value="DNA-dir_RpoC_beta_prime_bact"/>
</dbReference>
<dbReference type="InterPro" id="IPR000722">
    <property type="entry name" value="RNA_pol_asu"/>
</dbReference>
<dbReference type="InterPro" id="IPR006592">
    <property type="entry name" value="RNA_pol_N"/>
</dbReference>
<dbReference type="InterPro" id="IPR007080">
    <property type="entry name" value="RNA_pol_Rpb1_1"/>
</dbReference>
<dbReference type="InterPro" id="IPR007066">
    <property type="entry name" value="RNA_pol_Rpb1_3"/>
</dbReference>
<dbReference type="InterPro" id="IPR042102">
    <property type="entry name" value="RNA_pol_Rpb1_3_sf"/>
</dbReference>
<dbReference type="InterPro" id="IPR007083">
    <property type="entry name" value="RNA_pol_Rpb1_4"/>
</dbReference>
<dbReference type="InterPro" id="IPR007081">
    <property type="entry name" value="RNA_pol_Rpb1_5"/>
</dbReference>
<dbReference type="InterPro" id="IPR044893">
    <property type="entry name" value="RNA_pol_Rpb1_clamp_domain"/>
</dbReference>
<dbReference type="InterPro" id="IPR038120">
    <property type="entry name" value="Rpb1_funnel_sf"/>
</dbReference>
<dbReference type="NCBIfam" id="TIGR02386">
    <property type="entry name" value="rpoC_TIGR"/>
    <property type="match status" value="1"/>
</dbReference>
<dbReference type="PANTHER" id="PTHR19376">
    <property type="entry name" value="DNA-DIRECTED RNA POLYMERASE"/>
    <property type="match status" value="1"/>
</dbReference>
<dbReference type="PANTHER" id="PTHR19376:SF54">
    <property type="entry name" value="DNA-DIRECTED RNA POLYMERASE SUBUNIT BETA"/>
    <property type="match status" value="1"/>
</dbReference>
<dbReference type="Pfam" id="PF04997">
    <property type="entry name" value="RNA_pol_Rpb1_1"/>
    <property type="match status" value="1"/>
</dbReference>
<dbReference type="Pfam" id="PF00623">
    <property type="entry name" value="RNA_pol_Rpb1_2"/>
    <property type="match status" value="1"/>
</dbReference>
<dbReference type="Pfam" id="PF04983">
    <property type="entry name" value="RNA_pol_Rpb1_3"/>
    <property type="match status" value="1"/>
</dbReference>
<dbReference type="Pfam" id="PF05000">
    <property type="entry name" value="RNA_pol_Rpb1_4"/>
    <property type="match status" value="1"/>
</dbReference>
<dbReference type="Pfam" id="PF04998">
    <property type="entry name" value="RNA_pol_Rpb1_5"/>
    <property type="match status" value="1"/>
</dbReference>
<dbReference type="SMART" id="SM00663">
    <property type="entry name" value="RPOLA_N"/>
    <property type="match status" value="1"/>
</dbReference>
<dbReference type="SUPFAM" id="SSF64484">
    <property type="entry name" value="beta and beta-prime subunits of DNA dependent RNA-polymerase"/>
    <property type="match status" value="1"/>
</dbReference>